<comment type="function">
    <text evidence="2">3'-to-5' exoribonuclease specific for small oligoribonucleotides.</text>
</comment>
<comment type="subcellular location">
    <subcellularLocation>
        <location evidence="2">Cytoplasm</location>
    </subcellularLocation>
</comment>
<comment type="similarity">
    <text evidence="2">Belongs to the oligoribonuclease family.</text>
</comment>
<dbReference type="EC" id="3.1.15.-" evidence="2"/>
<dbReference type="EMBL" id="AE017220">
    <property type="protein sequence ID" value="AAX68135.1"/>
    <property type="molecule type" value="Genomic_DNA"/>
</dbReference>
<dbReference type="RefSeq" id="WP_001271546.1">
    <property type="nucleotide sequence ID" value="NC_006905.1"/>
</dbReference>
<dbReference type="SMR" id="Q57GM7"/>
<dbReference type="KEGG" id="sec:SCH_4229"/>
<dbReference type="HOGENOM" id="CLU_064761_2_0_6"/>
<dbReference type="Proteomes" id="UP000000538">
    <property type="component" value="Chromosome"/>
</dbReference>
<dbReference type="GO" id="GO:0005737">
    <property type="term" value="C:cytoplasm"/>
    <property type="evidence" value="ECO:0007669"/>
    <property type="project" value="UniProtKB-SubCell"/>
</dbReference>
<dbReference type="GO" id="GO:0000175">
    <property type="term" value="F:3'-5'-RNA exonuclease activity"/>
    <property type="evidence" value="ECO:0007669"/>
    <property type="project" value="InterPro"/>
</dbReference>
<dbReference type="GO" id="GO:0003676">
    <property type="term" value="F:nucleic acid binding"/>
    <property type="evidence" value="ECO:0007669"/>
    <property type="project" value="InterPro"/>
</dbReference>
<dbReference type="GO" id="GO:0006259">
    <property type="term" value="P:DNA metabolic process"/>
    <property type="evidence" value="ECO:0007669"/>
    <property type="project" value="UniProtKB-ARBA"/>
</dbReference>
<dbReference type="CDD" id="cd06135">
    <property type="entry name" value="Orn"/>
    <property type="match status" value="1"/>
</dbReference>
<dbReference type="FunFam" id="3.30.420.10:FF:000003">
    <property type="entry name" value="Oligoribonuclease"/>
    <property type="match status" value="1"/>
</dbReference>
<dbReference type="Gene3D" id="3.30.420.10">
    <property type="entry name" value="Ribonuclease H-like superfamily/Ribonuclease H"/>
    <property type="match status" value="1"/>
</dbReference>
<dbReference type="HAMAP" id="MF_00045">
    <property type="entry name" value="Oligoribonuclease"/>
    <property type="match status" value="1"/>
</dbReference>
<dbReference type="InterPro" id="IPR013520">
    <property type="entry name" value="Exonuclease_RNaseT/DNA_pol3"/>
</dbReference>
<dbReference type="InterPro" id="IPR022894">
    <property type="entry name" value="Oligoribonuclease"/>
</dbReference>
<dbReference type="InterPro" id="IPR012337">
    <property type="entry name" value="RNaseH-like_sf"/>
</dbReference>
<dbReference type="InterPro" id="IPR036397">
    <property type="entry name" value="RNaseH_sf"/>
</dbReference>
<dbReference type="NCBIfam" id="NF003765">
    <property type="entry name" value="PRK05359.1"/>
    <property type="match status" value="1"/>
</dbReference>
<dbReference type="PANTHER" id="PTHR11046">
    <property type="entry name" value="OLIGORIBONUCLEASE, MITOCHONDRIAL"/>
    <property type="match status" value="1"/>
</dbReference>
<dbReference type="PANTHER" id="PTHR11046:SF0">
    <property type="entry name" value="OLIGORIBONUCLEASE, MITOCHONDRIAL"/>
    <property type="match status" value="1"/>
</dbReference>
<dbReference type="Pfam" id="PF00929">
    <property type="entry name" value="RNase_T"/>
    <property type="match status" value="1"/>
</dbReference>
<dbReference type="SMART" id="SM00479">
    <property type="entry name" value="EXOIII"/>
    <property type="match status" value="1"/>
</dbReference>
<dbReference type="SUPFAM" id="SSF53098">
    <property type="entry name" value="Ribonuclease H-like"/>
    <property type="match status" value="1"/>
</dbReference>
<organism>
    <name type="scientific">Salmonella choleraesuis (strain SC-B67)</name>
    <dbReference type="NCBI Taxonomy" id="321314"/>
    <lineage>
        <taxon>Bacteria</taxon>
        <taxon>Pseudomonadati</taxon>
        <taxon>Pseudomonadota</taxon>
        <taxon>Gammaproteobacteria</taxon>
        <taxon>Enterobacterales</taxon>
        <taxon>Enterobacteriaceae</taxon>
        <taxon>Salmonella</taxon>
    </lineage>
</organism>
<accession>Q57GM7</accession>
<reference key="1">
    <citation type="journal article" date="2005" name="Nucleic Acids Res.">
        <title>The genome sequence of Salmonella enterica serovar Choleraesuis, a highly invasive and resistant zoonotic pathogen.</title>
        <authorList>
            <person name="Chiu C.-H."/>
            <person name="Tang P."/>
            <person name="Chu C."/>
            <person name="Hu S."/>
            <person name="Bao Q."/>
            <person name="Yu J."/>
            <person name="Chou Y.-Y."/>
            <person name="Wang H.-S."/>
            <person name="Lee Y.-S."/>
        </authorList>
    </citation>
    <scope>NUCLEOTIDE SEQUENCE [LARGE SCALE GENOMIC DNA]</scope>
    <source>
        <strain>SC-B67</strain>
    </source>
</reference>
<name>ORN_SALCH</name>
<proteinExistence type="inferred from homology"/>
<evidence type="ECO:0000250" key="1"/>
<evidence type="ECO:0000255" key="2">
    <source>
        <dbReference type="HAMAP-Rule" id="MF_00045"/>
    </source>
</evidence>
<protein>
    <recommendedName>
        <fullName evidence="2">Oligoribonuclease</fullName>
        <ecNumber evidence="2">3.1.15.-</ecNumber>
    </recommendedName>
</protein>
<feature type="initiator methionine" description="Removed" evidence="1">
    <location>
        <position position="1"/>
    </location>
</feature>
<feature type="chain" id="PRO_0000111066" description="Oligoribonuclease">
    <location>
        <begin position="2"/>
        <end position="181"/>
    </location>
</feature>
<feature type="domain" description="Exonuclease" evidence="2">
    <location>
        <begin position="8"/>
        <end position="171"/>
    </location>
</feature>
<feature type="active site" evidence="2">
    <location>
        <position position="129"/>
    </location>
</feature>
<keyword id="KW-0963">Cytoplasm</keyword>
<keyword id="KW-0269">Exonuclease</keyword>
<keyword id="KW-0378">Hydrolase</keyword>
<keyword id="KW-0540">Nuclease</keyword>
<gene>
    <name evidence="2" type="primary">orn</name>
    <name type="ordered locus">SCH_4229</name>
</gene>
<sequence length="181" mass="20632">MSADENNLIWIDLEMTGLDPERDRIIEIATLVTDASLNILAEGPTIAVHQSDAQLALMDDWNVRTHTGSGLVDRVKASTMGERDAELATIEFLKTWVPAGKSPICGNSIGQDRRFLFKYMPELEAYFHYRYLDVSTLKELARRWKPEILAGFTKQGTHQAMDDIRESVAELAYYREHFIKL</sequence>